<keyword id="KW-0238">DNA-binding</keyword>
<keyword id="KW-0479">Metal-binding</keyword>
<keyword id="KW-0539">Nucleus</keyword>
<keyword id="KW-1185">Reference proteome</keyword>
<keyword id="KW-0804">Transcription</keyword>
<keyword id="KW-0805">Transcription regulation</keyword>
<keyword id="KW-0862">Zinc</keyword>
<keyword id="KW-0863">Zinc-finger</keyword>
<sequence>MGSFGMDWNQKSSVLWDWENMPPIGNSANENPKNVMLAESKLAGVGVDIGHESGHSSGGTFSSSSEIGYGSSKSSISASIDSPSKVGNTIELNFASAEEHDKNMDKGKSKVDDTGTSRSPVVAANRVEPLIGLKLGKRTYFEDVCGGQNVKSSPSGVSVATPSPGLAKKVKVAQQNTQNPHCQVEGCNVDLSSAKPYHRKHRVCEPHSKTLKVIVAGLERRFCQQCSRFHGLAEFDQKKRSCRRRLHDHNARRRKPQPEAISLSSSRLSTLLYGDARQQASFLFGQAPYGQMGSCASSWDNPVPGGFKFTATKAPWSRPTIAAGVDGTHVSNQQASGNVLPHGAHHSFDGLMAFKETNAKVLNQGMEASAVASGSARGPDFEHALSLLSIDSVGAANLQPGSQIHPGVTAIAGTSNPVMMPSPAIWQGGLSLDQQAQFQAFDRLGNDDDEDHLQLPKPSYDNSHYDQMN</sequence>
<feature type="chain" id="PRO_0000308226" description="Squamosa promoter-binding-like protein 3">
    <location>
        <begin position="1"/>
        <end position="469"/>
    </location>
</feature>
<feature type="zinc finger region" description="SBP-type" evidence="3">
    <location>
        <begin position="179"/>
        <end position="256"/>
    </location>
</feature>
<feature type="region of interest" description="Disordered" evidence="4">
    <location>
        <begin position="96"/>
        <end position="118"/>
    </location>
</feature>
<feature type="region of interest" description="Disordered" evidence="4">
    <location>
        <begin position="446"/>
        <end position="469"/>
    </location>
</feature>
<feature type="short sequence motif" description="Bipartite nuclear localization signal" evidence="2">
    <location>
        <begin position="239"/>
        <end position="255"/>
    </location>
</feature>
<feature type="compositionally biased region" description="Basic and acidic residues" evidence="4">
    <location>
        <begin position="97"/>
        <end position="115"/>
    </location>
</feature>
<feature type="compositionally biased region" description="Polar residues" evidence="4">
    <location>
        <begin position="460"/>
        <end position="469"/>
    </location>
</feature>
<feature type="binding site" evidence="3">
    <location>
        <position position="182"/>
    </location>
    <ligand>
        <name>Zn(2+)</name>
        <dbReference type="ChEBI" id="CHEBI:29105"/>
        <label>1</label>
    </ligand>
</feature>
<feature type="binding site" evidence="3">
    <location>
        <position position="187"/>
    </location>
    <ligand>
        <name>Zn(2+)</name>
        <dbReference type="ChEBI" id="CHEBI:29105"/>
        <label>1</label>
    </ligand>
</feature>
<feature type="binding site" evidence="3">
    <location>
        <position position="204"/>
    </location>
    <ligand>
        <name>Zn(2+)</name>
        <dbReference type="ChEBI" id="CHEBI:29105"/>
        <label>1</label>
    </ligand>
</feature>
<feature type="binding site" evidence="3">
    <location>
        <position position="207"/>
    </location>
    <ligand>
        <name>Zn(2+)</name>
        <dbReference type="ChEBI" id="CHEBI:29105"/>
        <label>1</label>
    </ligand>
</feature>
<feature type="binding site" evidence="3">
    <location>
        <position position="223"/>
    </location>
    <ligand>
        <name>Zn(2+)</name>
        <dbReference type="ChEBI" id="CHEBI:29105"/>
        <label>2</label>
    </ligand>
</feature>
<feature type="binding site" evidence="3">
    <location>
        <position position="226"/>
    </location>
    <ligand>
        <name>Zn(2+)</name>
        <dbReference type="ChEBI" id="CHEBI:29105"/>
        <label>2</label>
    </ligand>
</feature>
<feature type="binding site" evidence="3">
    <location>
        <position position="230"/>
    </location>
    <ligand>
        <name>Zn(2+)</name>
        <dbReference type="ChEBI" id="CHEBI:29105"/>
        <label>2</label>
    </ligand>
</feature>
<feature type="binding site" evidence="3">
    <location>
        <position position="242"/>
    </location>
    <ligand>
        <name>Zn(2+)</name>
        <dbReference type="ChEBI" id="CHEBI:29105"/>
        <label>2</label>
    </ligand>
</feature>
<dbReference type="EMBL" id="CM000127">
    <property type="protein sequence ID" value="EAY84416.1"/>
    <property type="molecule type" value="Genomic_DNA"/>
</dbReference>
<dbReference type="SMR" id="A2X0Q6"/>
<dbReference type="EnsemblPlants" id="BGIOSGA007499-TA">
    <property type="protein sequence ID" value="BGIOSGA007499-PA"/>
    <property type="gene ID" value="BGIOSGA007499"/>
</dbReference>
<dbReference type="EnsemblPlants" id="OsLaMu_02g0003140.02">
    <property type="protein sequence ID" value="OsLaMu_02g0003140.02"/>
    <property type="gene ID" value="OsLaMu_02g0003140"/>
</dbReference>
<dbReference type="EnsemblPlants" id="OsMH63_02G003160_01">
    <property type="protein sequence ID" value="OsMH63_02G003160_01"/>
    <property type="gene ID" value="OsMH63_02G003160"/>
</dbReference>
<dbReference type="Gramene" id="BGIOSGA007499-TA">
    <property type="protein sequence ID" value="BGIOSGA007499-PA"/>
    <property type="gene ID" value="BGIOSGA007499"/>
</dbReference>
<dbReference type="Gramene" id="OsLaMu_02g0003140.02">
    <property type="protein sequence ID" value="OsLaMu_02g0003140.02"/>
    <property type="gene ID" value="OsLaMu_02g0003140"/>
</dbReference>
<dbReference type="Gramene" id="OsMH63_02G003160_01">
    <property type="protein sequence ID" value="OsMH63_02G003160_01"/>
    <property type="gene ID" value="OsMH63_02G003160"/>
</dbReference>
<dbReference type="HOGENOM" id="CLU_026055_2_0_1"/>
<dbReference type="OMA" id="KPYKADS"/>
<dbReference type="Proteomes" id="UP000007015">
    <property type="component" value="Chromosome 2"/>
</dbReference>
<dbReference type="GO" id="GO:0005634">
    <property type="term" value="C:nucleus"/>
    <property type="evidence" value="ECO:0007669"/>
    <property type="project" value="UniProtKB-SubCell"/>
</dbReference>
<dbReference type="GO" id="GO:0003677">
    <property type="term" value="F:DNA binding"/>
    <property type="evidence" value="ECO:0007669"/>
    <property type="project" value="UniProtKB-KW"/>
</dbReference>
<dbReference type="GO" id="GO:0008270">
    <property type="term" value="F:zinc ion binding"/>
    <property type="evidence" value="ECO:0007669"/>
    <property type="project" value="UniProtKB-KW"/>
</dbReference>
<dbReference type="FunFam" id="4.10.1100.10:FF:000001">
    <property type="entry name" value="Squamosa promoter-binding-like protein 14"/>
    <property type="match status" value="1"/>
</dbReference>
<dbReference type="Gene3D" id="4.10.1100.10">
    <property type="entry name" value="Transcription factor, SBP-box domain"/>
    <property type="match status" value="1"/>
</dbReference>
<dbReference type="InterPro" id="IPR044817">
    <property type="entry name" value="SBP-like"/>
</dbReference>
<dbReference type="InterPro" id="IPR004333">
    <property type="entry name" value="SBP_dom"/>
</dbReference>
<dbReference type="InterPro" id="IPR036893">
    <property type="entry name" value="SBP_sf"/>
</dbReference>
<dbReference type="PANTHER" id="PTHR31251:SF74">
    <property type="entry name" value="SQUAMOSA PROMOTER-BINDING-LIKE PROTEIN 2"/>
    <property type="match status" value="1"/>
</dbReference>
<dbReference type="PANTHER" id="PTHR31251">
    <property type="entry name" value="SQUAMOSA PROMOTER-BINDING-LIKE PROTEIN 4"/>
    <property type="match status" value="1"/>
</dbReference>
<dbReference type="Pfam" id="PF03110">
    <property type="entry name" value="SBP"/>
    <property type="match status" value="1"/>
</dbReference>
<dbReference type="SUPFAM" id="SSF103612">
    <property type="entry name" value="SBT domain"/>
    <property type="match status" value="1"/>
</dbReference>
<dbReference type="PROSITE" id="PS51141">
    <property type="entry name" value="ZF_SBP"/>
    <property type="match status" value="1"/>
</dbReference>
<organism>
    <name type="scientific">Oryza sativa subsp. indica</name>
    <name type="common">Rice</name>
    <dbReference type="NCBI Taxonomy" id="39946"/>
    <lineage>
        <taxon>Eukaryota</taxon>
        <taxon>Viridiplantae</taxon>
        <taxon>Streptophyta</taxon>
        <taxon>Embryophyta</taxon>
        <taxon>Tracheophyta</taxon>
        <taxon>Spermatophyta</taxon>
        <taxon>Magnoliopsida</taxon>
        <taxon>Liliopsida</taxon>
        <taxon>Poales</taxon>
        <taxon>Poaceae</taxon>
        <taxon>BOP clade</taxon>
        <taxon>Oryzoideae</taxon>
        <taxon>Oryzeae</taxon>
        <taxon>Oryzinae</taxon>
        <taxon>Oryza</taxon>
        <taxon>Oryza sativa</taxon>
    </lineage>
</organism>
<proteinExistence type="evidence at transcript level"/>
<name>SPL3_ORYSI</name>
<comment type="function">
    <text evidence="1">Trans-acting factor that binds specifically to the consensus nucleotide sequence 5'-TNCGTACAA-3' (By similarity). May be involved in panicle development.</text>
</comment>
<comment type="subcellular location">
    <subcellularLocation>
        <location evidence="6">Nucleus</location>
    </subcellularLocation>
</comment>
<comment type="tissue specificity">
    <text evidence="5">Ubiquitous.</text>
</comment>
<comment type="domain">
    <text evidence="1">The SBP-type zinc finger is required for the binding to DNA.</text>
</comment>
<gene>
    <name type="primary">SPL3</name>
    <name type="ORF">OsI_005649</name>
</gene>
<protein>
    <recommendedName>
        <fullName>Squamosa promoter-binding-like protein 3</fullName>
    </recommendedName>
</protein>
<evidence type="ECO:0000250" key="1"/>
<evidence type="ECO:0000255" key="2"/>
<evidence type="ECO:0000255" key="3">
    <source>
        <dbReference type="PROSITE-ProRule" id="PRU00470"/>
    </source>
</evidence>
<evidence type="ECO:0000256" key="4">
    <source>
        <dbReference type="SAM" id="MobiDB-lite"/>
    </source>
</evidence>
<evidence type="ECO:0000269" key="5">
    <source>
    </source>
</evidence>
<evidence type="ECO:0000305" key="6"/>
<reference key="1">
    <citation type="journal article" date="2005" name="PLoS Biol.">
        <title>The genomes of Oryza sativa: a history of duplications.</title>
        <authorList>
            <person name="Yu J."/>
            <person name="Wang J."/>
            <person name="Lin W."/>
            <person name="Li S."/>
            <person name="Li H."/>
            <person name="Zhou J."/>
            <person name="Ni P."/>
            <person name="Dong W."/>
            <person name="Hu S."/>
            <person name="Zeng C."/>
            <person name="Zhang J."/>
            <person name="Zhang Y."/>
            <person name="Li R."/>
            <person name="Xu Z."/>
            <person name="Li S."/>
            <person name="Li X."/>
            <person name="Zheng H."/>
            <person name="Cong L."/>
            <person name="Lin L."/>
            <person name="Yin J."/>
            <person name="Geng J."/>
            <person name="Li G."/>
            <person name="Shi J."/>
            <person name="Liu J."/>
            <person name="Lv H."/>
            <person name="Li J."/>
            <person name="Wang J."/>
            <person name="Deng Y."/>
            <person name="Ran L."/>
            <person name="Shi X."/>
            <person name="Wang X."/>
            <person name="Wu Q."/>
            <person name="Li C."/>
            <person name="Ren X."/>
            <person name="Wang J."/>
            <person name="Wang X."/>
            <person name="Li D."/>
            <person name="Liu D."/>
            <person name="Zhang X."/>
            <person name="Ji Z."/>
            <person name="Zhao W."/>
            <person name="Sun Y."/>
            <person name="Zhang Z."/>
            <person name="Bao J."/>
            <person name="Han Y."/>
            <person name="Dong L."/>
            <person name="Ji J."/>
            <person name="Chen P."/>
            <person name="Wu S."/>
            <person name="Liu J."/>
            <person name="Xiao Y."/>
            <person name="Bu D."/>
            <person name="Tan J."/>
            <person name="Yang L."/>
            <person name="Ye C."/>
            <person name="Zhang J."/>
            <person name="Xu J."/>
            <person name="Zhou Y."/>
            <person name="Yu Y."/>
            <person name="Zhang B."/>
            <person name="Zhuang S."/>
            <person name="Wei H."/>
            <person name="Liu B."/>
            <person name="Lei M."/>
            <person name="Yu H."/>
            <person name="Li Y."/>
            <person name="Xu H."/>
            <person name="Wei S."/>
            <person name="He X."/>
            <person name="Fang L."/>
            <person name="Zhang Z."/>
            <person name="Zhang Y."/>
            <person name="Huang X."/>
            <person name="Su Z."/>
            <person name="Tong W."/>
            <person name="Li J."/>
            <person name="Tong Z."/>
            <person name="Li S."/>
            <person name="Ye J."/>
            <person name="Wang L."/>
            <person name="Fang L."/>
            <person name="Lei T."/>
            <person name="Chen C.-S."/>
            <person name="Chen H.-C."/>
            <person name="Xu Z."/>
            <person name="Li H."/>
            <person name="Huang H."/>
            <person name="Zhang F."/>
            <person name="Xu H."/>
            <person name="Li N."/>
            <person name="Zhao C."/>
            <person name="Li S."/>
            <person name="Dong L."/>
            <person name="Huang Y."/>
            <person name="Li L."/>
            <person name="Xi Y."/>
            <person name="Qi Q."/>
            <person name="Li W."/>
            <person name="Zhang B."/>
            <person name="Hu W."/>
            <person name="Zhang Y."/>
            <person name="Tian X."/>
            <person name="Jiao Y."/>
            <person name="Liang X."/>
            <person name="Jin J."/>
            <person name="Gao L."/>
            <person name="Zheng W."/>
            <person name="Hao B."/>
            <person name="Liu S.-M."/>
            <person name="Wang W."/>
            <person name="Yuan L."/>
            <person name="Cao M."/>
            <person name="McDermott J."/>
            <person name="Samudrala R."/>
            <person name="Wang J."/>
            <person name="Wong G.K.-S."/>
            <person name="Yang H."/>
        </authorList>
    </citation>
    <scope>NUCLEOTIDE SEQUENCE [LARGE SCALE GENOMIC DNA]</scope>
    <source>
        <strain>cv. 93-11</strain>
    </source>
</reference>
<reference key="2">
    <citation type="journal article" date="2006" name="Plant Physiol.">
        <title>Genomic organization, differential expression, and interaction of SQUAMOSA promoter-binding-like transcription factors and microRNA156 in rice.</title>
        <authorList>
            <person name="Xie K."/>
            <person name="Wu C."/>
            <person name="Xiong L."/>
        </authorList>
    </citation>
    <scope>TISSUE SPECIFICITY</scope>
    <scope>GENE FAMILY</scope>
    <scope>NOMENCLATURE</scope>
</reference>
<reference key="3">
    <citation type="journal article" date="2008" name="Gene">
        <title>Comparative study of SBP-box gene family in Arabidopsis and rice.</title>
        <authorList>
            <person name="Yang Z."/>
            <person name="Wang X."/>
            <person name="Gu S."/>
            <person name="Hu Z."/>
            <person name="Xu H."/>
            <person name="Xu C."/>
        </authorList>
    </citation>
    <scope>GENE FAMILY</scope>
</reference>
<accession>A2X0Q6</accession>